<comment type="function">
    <text>May act as molecular guidance cue in cellular migration, and function may be mediated by interaction with roundabout homolog receptors.</text>
</comment>
<comment type="subcellular location">
    <subcellularLocation>
        <location evidence="1">Secreted</location>
    </subcellularLocation>
</comment>
<comment type="developmental stage">
    <text evidence="6">Detected at 20 dpc, and between P0 and P5 in olfactory mitral cells. Detected between 18 dpc and 20 dpc, between P0 and P10, and in adult in anterior olfactory nuclei and in ventromedial hypothalamic nuclei. Detected at 15 dpc in cortex marginal zone. Detected between 15 dpc and 20 dpc, between P0 and P10, and in adult in cortex entorhinal and periform region, hippocampal regions, basal telencephalon bed stria terminalis nuclei. Detected at 20 dpc, between P0 and P10, and in adult in cortex induseum griseum and tenia tecta, and basal telencephalon olfactory tubercle. Detected between P0 and P10, and in adult in ventral thalamus zona incerta. Detected between P5 and P10, and in adult in ventral thalamus reticular nuclei. Detected between P0 and P10, and in adult in dorsal thalamus regions.</text>
</comment>
<gene>
    <name type="primary">Slit3</name>
    <name type="synonym">Megf5</name>
</gene>
<reference key="1">
    <citation type="journal article" date="1998" name="Genomics">
        <title>Identification of high-molecular-weight proteins with multiple EGF-like motifs by motif-trap screening.</title>
        <authorList>
            <person name="Nakayama M."/>
            <person name="Nakajima D."/>
            <person name="Nagase T."/>
            <person name="Nomura N."/>
            <person name="Seki N."/>
            <person name="Ohara O."/>
        </authorList>
    </citation>
    <scope>NUCLEOTIDE SEQUENCE [MRNA]</scope>
    <source>
        <strain>Sprague-Dawley</strain>
        <tissue>Brain</tissue>
    </source>
</reference>
<reference key="2">
    <citation type="journal article" date="2002" name="J. Comp. Neurol.">
        <title>Spatiotemporal expression patterns of slit and robo genes in the rat brain.</title>
        <authorList>
            <person name="Marillat V."/>
            <person name="Cases O."/>
            <person name="Nguyen-Ba-Charvet K.T."/>
            <person name="Tessier-Lavigne M."/>
            <person name="Sotelo C."/>
            <person name="Chedotal A."/>
        </authorList>
    </citation>
    <scope>DEVELOPMENTAL STAGE</scope>
</reference>
<accession>O88280</accession>
<organism>
    <name type="scientific">Rattus norvegicus</name>
    <name type="common">Rat</name>
    <dbReference type="NCBI Taxonomy" id="10116"/>
    <lineage>
        <taxon>Eukaryota</taxon>
        <taxon>Metazoa</taxon>
        <taxon>Chordata</taxon>
        <taxon>Craniata</taxon>
        <taxon>Vertebrata</taxon>
        <taxon>Euteleostomi</taxon>
        <taxon>Mammalia</taxon>
        <taxon>Eutheria</taxon>
        <taxon>Euarchontoglires</taxon>
        <taxon>Glires</taxon>
        <taxon>Rodentia</taxon>
        <taxon>Myomorpha</taxon>
        <taxon>Muroidea</taxon>
        <taxon>Muridae</taxon>
        <taxon>Murinae</taxon>
        <taxon>Rattus</taxon>
    </lineage>
</organism>
<name>SLIT3_RAT</name>
<keyword id="KW-0217">Developmental protein</keyword>
<keyword id="KW-0221">Differentiation</keyword>
<keyword id="KW-1015">Disulfide bond</keyword>
<keyword id="KW-0245">EGF-like domain</keyword>
<keyword id="KW-0325">Glycoprotein</keyword>
<keyword id="KW-0433">Leucine-rich repeat</keyword>
<keyword id="KW-0524">Neurogenesis</keyword>
<keyword id="KW-1185">Reference proteome</keyword>
<keyword id="KW-0677">Repeat</keyword>
<keyword id="KW-0964">Secreted</keyword>
<keyword id="KW-0732">Signal</keyword>
<feature type="signal peptide" evidence="2">
    <location>
        <begin position="1"/>
        <end position="33"/>
    </location>
</feature>
<feature type="chain" id="PRO_0000007734" description="Slit homolog 3 protein">
    <location>
        <begin position="34"/>
        <end position="1523"/>
    </location>
</feature>
<feature type="domain" description="LRRNT">
    <location>
        <begin position="34"/>
        <end position="61"/>
    </location>
</feature>
<feature type="repeat" description="LRR 1">
    <location>
        <begin position="62"/>
        <end position="83"/>
    </location>
</feature>
<feature type="repeat" description="LRR 2">
    <location>
        <begin position="86"/>
        <end position="107"/>
    </location>
</feature>
<feature type="repeat" description="LRR 3">
    <location>
        <begin position="110"/>
        <end position="131"/>
    </location>
</feature>
<feature type="repeat" description="LRR 4">
    <location>
        <begin position="134"/>
        <end position="155"/>
    </location>
</feature>
<feature type="repeat" description="LRR 5">
    <location>
        <begin position="158"/>
        <end position="179"/>
    </location>
</feature>
<feature type="repeat" description="LRR 6">
    <location>
        <begin position="182"/>
        <end position="203"/>
    </location>
</feature>
<feature type="domain" description="LRRCT 1">
    <location>
        <begin position="215"/>
        <end position="265"/>
    </location>
</feature>
<feature type="domain" description="LRRNT 2">
    <location>
        <begin position="271"/>
        <end position="307"/>
    </location>
</feature>
<feature type="repeat" description="LRR 7">
    <location>
        <begin position="308"/>
        <end position="329"/>
    </location>
</feature>
<feature type="repeat" description="LRR 8">
    <location>
        <begin position="332"/>
        <end position="353"/>
    </location>
</feature>
<feature type="repeat" description="LRR 9">
    <location>
        <begin position="356"/>
        <end position="377"/>
    </location>
</feature>
<feature type="repeat" description="LRR 10">
    <location>
        <begin position="380"/>
        <end position="401"/>
    </location>
</feature>
<feature type="repeat" description="LRR 11">
    <location>
        <begin position="404"/>
        <end position="425"/>
    </location>
</feature>
<feature type="domain" description="LRRCT 2">
    <location>
        <begin position="437"/>
        <end position="487"/>
    </location>
</feature>
<feature type="domain" description="LRRNT 3">
    <location>
        <begin position="496"/>
        <end position="532"/>
    </location>
</feature>
<feature type="repeat" description="LRR 12">
    <location>
        <begin position="533"/>
        <end position="554"/>
    </location>
</feature>
<feature type="repeat" description="LRR 13">
    <location>
        <begin position="558"/>
        <end position="579"/>
    </location>
</feature>
<feature type="repeat" description="LRR 14">
    <location>
        <begin position="582"/>
        <end position="603"/>
    </location>
</feature>
<feature type="repeat" description="LRR 15">
    <location>
        <begin position="606"/>
        <end position="627"/>
    </location>
</feature>
<feature type="repeat" description="LRR 16">
    <location>
        <begin position="630"/>
        <end position="651"/>
    </location>
</feature>
<feature type="domain" description="LRRCT 3">
    <location>
        <begin position="663"/>
        <end position="713"/>
    </location>
</feature>
<feature type="domain" description="LRRNT 4">
    <location>
        <begin position="716"/>
        <end position="752"/>
    </location>
</feature>
<feature type="repeat" description="LRR 17">
    <location>
        <begin position="753"/>
        <end position="774"/>
    </location>
</feature>
<feature type="repeat" description="LRR 18">
    <location>
        <begin position="776"/>
        <end position="797"/>
    </location>
</feature>
<feature type="repeat" description="LRR 19">
    <location>
        <begin position="800"/>
        <end position="821"/>
    </location>
</feature>
<feature type="repeat" description="LRR 20">
    <location>
        <begin position="824"/>
        <end position="845"/>
    </location>
</feature>
<feature type="domain" description="LRRCT 4">
    <location>
        <begin position="857"/>
        <end position="907"/>
    </location>
</feature>
<feature type="domain" description="EGF-like 1" evidence="4">
    <location>
        <begin position="918"/>
        <end position="953"/>
    </location>
</feature>
<feature type="domain" description="EGF-like 2" evidence="4">
    <location>
        <begin position="955"/>
        <end position="994"/>
    </location>
</feature>
<feature type="domain" description="EGF-like 3" evidence="4">
    <location>
        <begin position="996"/>
        <end position="1032"/>
    </location>
</feature>
<feature type="domain" description="EGF-like 4" evidence="4">
    <location>
        <begin position="1034"/>
        <end position="1072"/>
    </location>
</feature>
<feature type="domain" description="EGF-like 5" evidence="4">
    <location>
        <begin position="1074"/>
        <end position="1110"/>
    </location>
</feature>
<feature type="domain" description="EGF-like 6" evidence="4">
    <location>
        <begin position="1119"/>
        <end position="1155"/>
    </location>
</feature>
<feature type="domain" description="Laminin G-like" evidence="5">
    <location>
        <begin position="1158"/>
        <end position="1332"/>
    </location>
</feature>
<feature type="domain" description="EGF-like 7" evidence="4">
    <location>
        <begin position="1340"/>
        <end position="1365"/>
    </location>
</feature>
<feature type="domain" description="EGF-like 8" evidence="4">
    <location>
        <begin position="1368"/>
        <end position="1403"/>
    </location>
</feature>
<feature type="domain" description="EGF-like 9" evidence="4">
    <location>
        <begin position="1408"/>
        <end position="1444"/>
    </location>
</feature>
<feature type="domain" description="CTCK" evidence="3">
    <location>
        <begin position="1449"/>
        <end position="1523"/>
    </location>
</feature>
<feature type="glycosylation site" description="N-linked (GlcNAc...) asparagine" evidence="2">
    <location>
        <position position="72"/>
    </location>
</feature>
<feature type="glycosylation site" description="N-linked (GlcNAc...) asparagine" evidence="2">
    <location>
        <position position="192"/>
    </location>
</feature>
<feature type="glycosylation site" description="N-linked (GlcNAc...) asparagine" evidence="2">
    <location>
        <position position="563"/>
    </location>
</feature>
<feature type="glycosylation site" description="N-linked (GlcNAc...) asparagine" evidence="2">
    <location>
        <position position="622"/>
    </location>
</feature>
<feature type="glycosylation site" description="N-linked (GlcNAc...) asparagine" evidence="2">
    <location>
        <position position="784"/>
    </location>
</feature>
<feature type="glycosylation site" description="N-linked (GlcNAc...) asparagine" evidence="2">
    <location>
        <position position="792"/>
    </location>
</feature>
<feature type="glycosylation site" description="N-linked (GlcNAc...) asparagine" evidence="2">
    <location>
        <position position="797"/>
    </location>
</feature>
<feature type="glycosylation site" description="N-linked (GlcNAc...) asparagine" evidence="2">
    <location>
        <position position="928"/>
    </location>
</feature>
<feature type="glycosylation site" description="N-linked (GlcNAc...) asparagine" evidence="2">
    <location>
        <position position="1025"/>
    </location>
</feature>
<feature type="glycosylation site" description="N-linked (GlcNAc...) asparagine" evidence="2">
    <location>
        <position position="1181"/>
    </location>
</feature>
<feature type="glycosylation site" description="N-linked (GlcNAc...) asparagine" evidence="2">
    <location>
        <position position="1247"/>
    </location>
</feature>
<feature type="glycosylation site" description="N-linked (GlcNAc...) asparagine" evidence="2">
    <location>
        <position position="1406"/>
    </location>
</feature>
<feature type="disulfide bond" evidence="1">
    <location>
        <begin position="284"/>
        <end position="293"/>
    </location>
</feature>
<feature type="disulfide bond" evidence="1">
    <location>
        <begin position="441"/>
        <end position="464"/>
    </location>
</feature>
<feature type="disulfide bond" evidence="1">
    <location>
        <begin position="443"/>
        <end position="485"/>
    </location>
</feature>
<feature type="disulfide bond" evidence="1">
    <location>
        <begin position="505"/>
        <end position="511"/>
    </location>
</feature>
<feature type="disulfide bond" evidence="1">
    <location>
        <begin position="509"/>
        <end position="518"/>
    </location>
</feature>
<feature type="disulfide bond" evidence="1">
    <location>
        <begin position="667"/>
        <end position="690"/>
    </location>
</feature>
<feature type="disulfide bond" evidence="1">
    <location>
        <begin position="669"/>
        <end position="711"/>
    </location>
</feature>
<feature type="disulfide bond" evidence="1">
    <location>
        <begin position="920"/>
        <end position="931"/>
    </location>
</feature>
<feature type="disulfide bond" evidence="1">
    <location>
        <begin position="925"/>
        <end position="941"/>
    </location>
</feature>
<feature type="disulfide bond" evidence="1">
    <location>
        <begin position="943"/>
        <end position="952"/>
    </location>
</feature>
<feature type="disulfide bond" evidence="1">
    <location>
        <begin position="959"/>
        <end position="970"/>
    </location>
</feature>
<feature type="disulfide bond" evidence="1">
    <location>
        <begin position="964"/>
        <end position="982"/>
    </location>
</feature>
<feature type="disulfide bond" evidence="1">
    <location>
        <begin position="984"/>
        <end position="993"/>
    </location>
</feature>
<feature type="disulfide bond" evidence="1">
    <location>
        <begin position="1000"/>
        <end position="1011"/>
    </location>
</feature>
<feature type="disulfide bond" evidence="1">
    <location>
        <begin position="1005"/>
        <end position="1020"/>
    </location>
</feature>
<feature type="disulfide bond" evidence="1">
    <location>
        <begin position="1022"/>
        <end position="1031"/>
    </location>
</feature>
<feature type="disulfide bond" evidence="1">
    <location>
        <begin position="1038"/>
        <end position="1051"/>
    </location>
</feature>
<feature type="disulfide bond" evidence="1">
    <location>
        <begin position="1045"/>
        <end position="1060"/>
    </location>
</feature>
<feature type="disulfide bond" evidence="1">
    <location>
        <begin position="1062"/>
        <end position="1071"/>
    </location>
</feature>
<feature type="disulfide bond" evidence="1">
    <location>
        <begin position="1078"/>
        <end position="1089"/>
    </location>
</feature>
<feature type="disulfide bond" evidence="1">
    <location>
        <begin position="1083"/>
        <end position="1098"/>
    </location>
</feature>
<feature type="disulfide bond" evidence="1">
    <location>
        <begin position="1100"/>
        <end position="1109"/>
    </location>
</feature>
<feature type="disulfide bond" evidence="1">
    <location>
        <begin position="1123"/>
        <end position="1134"/>
    </location>
</feature>
<feature type="disulfide bond" evidence="1">
    <location>
        <begin position="1128"/>
        <end position="1143"/>
    </location>
</feature>
<feature type="disulfide bond" evidence="1">
    <location>
        <begin position="1145"/>
        <end position="1154"/>
    </location>
</feature>
<feature type="disulfide bond" evidence="1">
    <location>
        <begin position="1305"/>
        <end position="1332"/>
    </location>
</feature>
<feature type="disulfide bond" evidence="1">
    <location>
        <begin position="1355"/>
        <end position="1364"/>
    </location>
</feature>
<feature type="disulfide bond" evidence="1">
    <location>
        <begin position="1372"/>
        <end position="1382"/>
    </location>
</feature>
<feature type="disulfide bond" evidence="1">
    <location>
        <begin position="1377"/>
        <end position="1391"/>
    </location>
</feature>
<feature type="disulfide bond" evidence="1">
    <location>
        <begin position="1393"/>
        <end position="1402"/>
    </location>
</feature>
<feature type="disulfide bond" evidence="1">
    <location>
        <begin position="1412"/>
        <end position="1422"/>
    </location>
</feature>
<feature type="disulfide bond" evidence="1">
    <location>
        <begin position="1417"/>
        <end position="1432"/>
    </location>
</feature>
<feature type="disulfide bond" evidence="1">
    <location>
        <begin position="1434"/>
        <end position="1443"/>
    </location>
</feature>
<feature type="disulfide bond" evidence="1">
    <location>
        <begin position="1449"/>
        <end position="1487"/>
    </location>
</feature>
<feature type="disulfide bond" evidence="1">
    <location>
        <begin position="1467"/>
        <end position="1501"/>
    </location>
</feature>
<feature type="disulfide bond" evidence="1">
    <location>
        <begin position="1478"/>
        <end position="1517"/>
    </location>
</feature>
<feature type="disulfide bond" evidence="1">
    <location>
        <begin position="1482"/>
        <end position="1519"/>
    </location>
</feature>
<sequence length="1523" mass="167768">MAPGRTGAGAAVRARLALALALASILSGPPAAACPTKCTCSAASVDCHGLGLRAVPRGIPRNAERLDLDRNNITRITKMDFTGLKNLRVLHLEDNQVSVIERGAFQDLKQLERLRLNKNKLQVLPELLFQSTPKLTRLDLSENQIQGIPRKAFRGVTGVKNLQLDNNHISCIEDGAFRALRDLEILTLNNNNISRILVTSFNHMPKIRTLRLHSNHLYCDCHLAWLSDWLRQRRTIGQFTLCMAPVHLRGFSVADVQKKEYVCPGPHSEAPACNANSLSCPSACSCSNNIVDCRGKGLTEIPANLPEGIVEIRLEQNSIKSIPAGAFIQYKKLKRIDISKNQISDIAPDAFQGLKSLTSLVLYGNKITEIPKGLFDGLVSLQLLLLNANKINCLRVNTFQDLQNLNLLSLYDNKLQTISKGLFAPLQSIQTLHLAQNPFVCDCHLKWLADYLQDNPIETSGARCSSPRRLANKRISQIKSKKFRCSGSEDYRNRFSSECFMDLVCPEKCRCEGTIVDCSNQKLSRIPSHLPEYTTDLRLNDNDIAVLEATGIFKKLPNLRKINLSNNRIKEVREGAFDGAAGVQELMLTGNQLETMHGRMFRGLSGLKTLMLRSNLISCVNNDTFAGLSSVRLLSLYDNRITTISPGAFTTLVSLSTINLLSNPFNCNCHMAWLGRWLRKRRIVSGNPRCQKPFFLKEIPIQDVAIQDFTCEGNEENSCQLSPRCPEQCTCVETVVRCSNRGLHTLPKGMPKDVTELYLEGNHLTAVPKELSTFRQLTLIDLSNNSISMLTNHTFSNMSHLSTLILSYNRLRCIPVHAFNGLRSLRVLTLHGNDISSVPEGSFNDLTSLSHLALGINPLHCDCSLRWLSEWIKAGYKEPGIARCSSPESMADRLLLTTPTHRFQCKGPVDINIVAKCNACLSSPCKNNGTCSQDPVEQYRCTCPYSYKGKDCTVPINTCVQNPCQHGGTCHLSESHRDGFSCSCPLGFEGQRCEINPDDCEDNDCENSATCVDGINNYACVCPPNYTGELCDEVIDYCVPEMNLCQHEAKCISLDKGFRCECVPGYSGKLCETDNDDCVAHKCRHGAQCVDAVNGYTCICPQGFSGLFCEHPPPMVLLQTSPCDQYECQNGAQCIVVQQEPTCRCPPGFAGPRCEKLITVNFVGKDSYVELASAKVRPQANISLQVATDKDNGILLYKGDNDPLALELYQGHVRLVYDSLSSPPTTVYSVETVNDGQFHSVELVMLNQTLNLVVDKGAPKSLGKLQKQPAVGINSPLYLGGIPTSTGLSALRQGADRPLGGFHGCIHEVRINNELQDFKALPPQSLGVSPGCKSCTVCRHGLCRSVEKDSVVCECHPGWTGPLCDQEAQDPCLGHSCSHGTCVATGNSYVCKCAEGYEGPLCDQKNDSANACSAFKCHHGQCHISDRGEPYCLCQPGFSGNHCEQENPCLGEIVREAIRRQKDYASCATASKVPIMVCRGGCGSQCCQPIRSKRRKYVFQCTDGSSFVEEVERHLECGCRECS</sequence>
<dbReference type="EMBL" id="AB011531">
    <property type="protein sequence ID" value="BAA32461.1"/>
    <property type="molecule type" value="mRNA"/>
</dbReference>
<dbReference type="PIR" id="T13953">
    <property type="entry name" value="T13953"/>
</dbReference>
<dbReference type="RefSeq" id="NP_112611.1">
    <property type="nucleotide sequence ID" value="NM_031321.1"/>
</dbReference>
<dbReference type="SMR" id="O88280"/>
<dbReference type="BioGRID" id="249708">
    <property type="interactions" value="1"/>
</dbReference>
<dbReference type="FunCoup" id="O88280">
    <property type="interactions" value="1212"/>
</dbReference>
<dbReference type="IntAct" id="O88280">
    <property type="interactions" value="2"/>
</dbReference>
<dbReference type="STRING" id="10116.ENSRNOP00000009714"/>
<dbReference type="CarbonylDB" id="O88280"/>
<dbReference type="GlyCosmos" id="O88280">
    <property type="glycosylation" value="12 sites, No reported glycans"/>
</dbReference>
<dbReference type="GlyGen" id="O88280">
    <property type="glycosylation" value="12 sites"/>
</dbReference>
<dbReference type="PhosphoSitePlus" id="O88280"/>
<dbReference type="PaxDb" id="10116-ENSRNOP00000009714"/>
<dbReference type="GeneID" id="83467"/>
<dbReference type="KEGG" id="rno:83467"/>
<dbReference type="UCSC" id="RGD:69311">
    <property type="organism name" value="rat"/>
</dbReference>
<dbReference type="AGR" id="RGD:69311"/>
<dbReference type="CTD" id="6586"/>
<dbReference type="RGD" id="69311">
    <property type="gene designation" value="Slit3"/>
</dbReference>
<dbReference type="eggNOG" id="KOG4237">
    <property type="taxonomic scope" value="Eukaryota"/>
</dbReference>
<dbReference type="InParanoid" id="O88280"/>
<dbReference type="OrthoDB" id="9125at9989"/>
<dbReference type="PhylomeDB" id="O88280"/>
<dbReference type="PRO" id="PR:O88280"/>
<dbReference type="Proteomes" id="UP000002494">
    <property type="component" value="Unplaced"/>
</dbReference>
<dbReference type="GO" id="GO:0005615">
    <property type="term" value="C:extracellular space"/>
    <property type="evidence" value="ECO:0000266"/>
    <property type="project" value="RGD"/>
</dbReference>
<dbReference type="GO" id="GO:0005509">
    <property type="term" value="F:calcium ion binding"/>
    <property type="evidence" value="ECO:0007669"/>
    <property type="project" value="InterPro"/>
</dbReference>
<dbReference type="GO" id="GO:0008201">
    <property type="term" value="F:heparin binding"/>
    <property type="evidence" value="ECO:0000318"/>
    <property type="project" value="GO_Central"/>
</dbReference>
<dbReference type="GO" id="GO:0048495">
    <property type="term" value="F:Roundabout binding"/>
    <property type="evidence" value="ECO:0000266"/>
    <property type="project" value="RGD"/>
</dbReference>
<dbReference type="GO" id="GO:0009887">
    <property type="term" value="P:animal organ morphogenesis"/>
    <property type="evidence" value="ECO:0000266"/>
    <property type="project" value="RGD"/>
</dbReference>
<dbReference type="GO" id="GO:0003180">
    <property type="term" value="P:aortic valve morphogenesis"/>
    <property type="evidence" value="ECO:0000266"/>
    <property type="project" value="RGD"/>
</dbReference>
<dbReference type="GO" id="GO:0061364">
    <property type="term" value="P:apoptotic process involved in luteolysis"/>
    <property type="evidence" value="ECO:0000266"/>
    <property type="project" value="RGD"/>
</dbReference>
<dbReference type="GO" id="GO:0003181">
    <property type="term" value="P:atrioventricular valve morphogenesis"/>
    <property type="evidence" value="ECO:0000266"/>
    <property type="project" value="RGD"/>
</dbReference>
<dbReference type="GO" id="GO:0048846">
    <property type="term" value="P:axon extension involved in axon guidance"/>
    <property type="evidence" value="ECO:0000266"/>
    <property type="project" value="RGD"/>
</dbReference>
<dbReference type="GO" id="GO:0007411">
    <property type="term" value="P:axon guidance"/>
    <property type="evidence" value="ECO:0000266"/>
    <property type="project" value="RGD"/>
</dbReference>
<dbReference type="GO" id="GO:0032870">
    <property type="term" value="P:cellular response to hormone stimulus"/>
    <property type="evidence" value="ECO:0000266"/>
    <property type="project" value="RGD"/>
</dbReference>
<dbReference type="GO" id="GO:0050919">
    <property type="term" value="P:negative chemotaxis"/>
    <property type="evidence" value="ECO:0000266"/>
    <property type="project" value="RGD"/>
</dbReference>
<dbReference type="GO" id="GO:0030308">
    <property type="term" value="P:negative regulation of cell growth"/>
    <property type="evidence" value="ECO:0000266"/>
    <property type="project" value="RGD"/>
</dbReference>
<dbReference type="GO" id="GO:0008285">
    <property type="term" value="P:negative regulation of cell population proliferation"/>
    <property type="evidence" value="ECO:0000266"/>
    <property type="project" value="RGD"/>
</dbReference>
<dbReference type="GO" id="GO:0070100">
    <property type="term" value="P:negative regulation of chemokine-mediated signaling pathway"/>
    <property type="evidence" value="ECO:0000266"/>
    <property type="project" value="RGD"/>
</dbReference>
<dbReference type="GO" id="GO:0010629">
    <property type="term" value="P:negative regulation of gene expression"/>
    <property type="evidence" value="ECO:0000266"/>
    <property type="project" value="RGD"/>
</dbReference>
<dbReference type="GO" id="GO:0051414">
    <property type="term" value="P:response to cortisol"/>
    <property type="evidence" value="ECO:0000266"/>
    <property type="project" value="RGD"/>
</dbReference>
<dbReference type="GO" id="GO:0035385">
    <property type="term" value="P:Roundabout signaling pathway"/>
    <property type="evidence" value="ECO:0000266"/>
    <property type="project" value="RGD"/>
</dbReference>
<dbReference type="GO" id="GO:0021510">
    <property type="term" value="P:spinal cord development"/>
    <property type="evidence" value="ECO:0000270"/>
    <property type="project" value="RGD"/>
</dbReference>
<dbReference type="GO" id="GO:0060412">
    <property type="term" value="P:ventricular septum morphogenesis"/>
    <property type="evidence" value="ECO:0000266"/>
    <property type="project" value="RGD"/>
</dbReference>
<dbReference type="CDD" id="cd00054">
    <property type="entry name" value="EGF_CA"/>
    <property type="match status" value="6"/>
</dbReference>
<dbReference type="CDD" id="cd00110">
    <property type="entry name" value="LamG"/>
    <property type="match status" value="1"/>
</dbReference>
<dbReference type="FunFam" id="2.10.25.10:FF:000080">
    <property type="entry name" value="Neurogenic locus notch 1"/>
    <property type="match status" value="1"/>
</dbReference>
<dbReference type="FunFam" id="2.10.25.10:FF:000045">
    <property type="entry name" value="Slit guidance ligand 2"/>
    <property type="match status" value="1"/>
</dbReference>
<dbReference type="FunFam" id="2.10.25.10:FF:000053">
    <property type="entry name" value="Slit guidance ligand 2"/>
    <property type="match status" value="1"/>
</dbReference>
<dbReference type="FunFam" id="2.10.25.10:FF:000054">
    <property type="entry name" value="Slit guidance ligand 2"/>
    <property type="match status" value="1"/>
</dbReference>
<dbReference type="FunFam" id="2.10.25.10:FF:000062">
    <property type="entry name" value="Slit guidance ligand 2"/>
    <property type="match status" value="1"/>
</dbReference>
<dbReference type="FunFam" id="2.10.25.10:FF:000063">
    <property type="entry name" value="Slit guidance ligand 2"/>
    <property type="match status" value="1"/>
</dbReference>
<dbReference type="FunFam" id="3.80.10.10:FF:000002">
    <property type="entry name" value="Slit guidance ligand 2"/>
    <property type="match status" value="2"/>
</dbReference>
<dbReference type="FunFam" id="3.80.10.10:FF:000004">
    <property type="entry name" value="Slit guidance ligand 2"/>
    <property type="match status" value="1"/>
</dbReference>
<dbReference type="FunFam" id="3.80.10.10:FF:000376">
    <property type="entry name" value="Slit guidance ligand 2"/>
    <property type="match status" value="1"/>
</dbReference>
<dbReference type="FunFam" id="2.10.25.10:FF:000375">
    <property type="entry name" value="Slit guidance ligand 3"/>
    <property type="match status" value="1"/>
</dbReference>
<dbReference type="FunFam" id="2.60.120.200:FF:000047">
    <property type="entry name" value="Slit guidance ligand 3"/>
    <property type="match status" value="1"/>
</dbReference>
<dbReference type="FunFam" id="3.80.10.10:FF:000032">
    <property type="entry name" value="Slit homolog 2 (Drosophila)"/>
    <property type="match status" value="1"/>
</dbReference>
<dbReference type="Gene3D" id="2.60.120.200">
    <property type="match status" value="1"/>
</dbReference>
<dbReference type="Gene3D" id="2.10.25.10">
    <property type="entry name" value="Laminin"/>
    <property type="match status" value="9"/>
</dbReference>
<dbReference type="Gene3D" id="3.80.10.10">
    <property type="entry name" value="Ribonuclease Inhibitor"/>
    <property type="match status" value="5"/>
</dbReference>
<dbReference type="InterPro" id="IPR013320">
    <property type="entry name" value="ConA-like_dom_sf"/>
</dbReference>
<dbReference type="InterPro" id="IPR000483">
    <property type="entry name" value="Cys-rich_flank_reg_C"/>
</dbReference>
<dbReference type="InterPro" id="IPR006207">
    <property type="entry name" value="Cys_knot_C"/>
</dbReference>
<dbReference type="InterPro" id="IPR001881">
    <property type="entry name" value="EGF-like_Ca-bd_dom"/>
</dbReference>
<dbReference type="InterPro" id="IPR000742">
    <property type="entry name" value="EGF-like_dom"/>
</dbReference>
<dbReference type="InterPro" id="IPR000152">
    <property type="entry name" value="EGF-type_Asp/Asn_hydroxyl_site"/>
</dbReference>
<dbReference type="InterPro" id="IPR018097">
    <property type="entry name" value="EGF_Ca-bd_CS"/>
</dbReference>
<dbReference type="InterPro" id="IPR009030">
    <property type="entry name" value="Growth_fac_rcpt_cys_sf"/>
</dbReference>
<dbReference type="InterPro" id="IPR001791">
    <property type="entry name" value="Laminin_G"/>
</dbReference>
<dbReference type="InterPro" id="IPR001611">
    <property type="entry name" value="Leu-rich_rpt"/>
</dbReference>
<dbReference type="InterPro" id="IPR003591">
    <property type="entry name" value="Leu-rich_rpt_typical-subtyp"/>
</dbReference>
<dbReference type="InterPro" id="IPR032675">
    <property type="entry name" value="LRR_dom_sf"/>
</dbReference>
<dbReference type="InterPro" id="IPR000372">
    <property type="entry name" value="LRRNT"/>
</dbReference>
<dbReference type="InterPro" id="IPR051355">
    <property type="entry name" value="Notch/Slit_guidance"/>
</dbReference>
<dbReference type="PANTHER" id="PTHR45836">
    <property type="entry name" value="SLIT HOMOLOG"/>
    <property type="match status" value="1"/>
</dbReference>
<dbReference type="PANTHER" id="PTHR45836:SF9">
    <property type="entry name" value="SLIT HOMOLOG 3 PROTEIN"/>
    <property type="match status" value="1"/>
</dbReference>
<dbReference type="Pfam" id="PF00008">
    <property type="entry name" value="EGF"/>
    <property type="match status" value="6"/>
</dbReference>
<dbReference type="Pfam" id="PF02210">
    <property type="entry name" value="Laminin_G_2"/>
    <property type="match status" value="1"/>
</dbReference>
<dbReference type="Pfam" id="PF13855">
    <property type="entry name" value="LRR_8"/>
    <property type="match status" value="5"/>
</dbReference>
<dbReference type="Pfam" id="PF01463">
    <property type="entry name" value="LRRCT"/>
    <property type="match status" value="4"/>
</dbReference>
<dbReference type="Pfam" id="PF01462">
    <property type="entry name" value="LRRNT"/>
    <property type="match status" value="3"/>
</dbReference>
<dbReference type="SMART" id="SM00041">
    <property type="entry name" value="CT"/>
    <property type="match status" value="1"/>
</dbReference>
<dbReference type="SMART" id="SM00181">
    <property type="entry name" value="EGF"/>
    <property type="match status" value="9"/>
</dbReference>
<dbReference type="SMART" id="SM00179">
    <property type="entry name" value="EGF_CA"/>
    <property type="match status" value="9"/>
</dbReference>
<dbReference type="SMART" id="SM00282">
    <property type="entry name" value="LamG"/>
    <property type="match status" value="1"/>
</dbReference>
<dbReference type="SMART" id="SM00364">
    <property type="entry name" value="LRR_BAC"/>
    <property type="match status" value="6"/>
</dbReference>
<dbReference type="SMART" id="SM00365">
    <property type="entry name" value="LRR_SD22"/>
    <property type="match status" value="9"/>
</dbReference>
<dbReference type="SMART" id="SM00369">
    <property type="entry name" value="LRR_TYP"/>
    <property type="match status" value="18"/>
</dbReference>
<dbReference type="SMART" id="SM00082">
    <property type="entry name" value="LRRCT"/>
    <property type="match status" value="4"/>
</dbReference>
<dbReference type="SMART" id="SM00013">
    <property type="entry name" value="LRRNT"/>
    <property type="match status" value="4"/>
</dbReference>
<dbReference type="SUPFAM" id="SSF49899">
    <property type="entry name" value="Concanavalin A-like lectins/glucanases"/>
    <property type="match status" value="1"/>
</dbReference>
<dbReference type="SUPFAM" id="SSF57196">
    <property type="entry name" value="EGF/Laminin"/>
    <property type="match status" value="4"/>
</dbReference>
<dbReference type="SUPFAM" id="SSF57184">
    <property type="entry name" value="Growth factor receptor domain"/>
    <property type="match status" value="1"/>
</dbReference>
<dbReference type="SUPFAM" id="SSF52058">
    <property type="entry name" value="L domain-like"/>
    <property type="match status" value="2"/>
</dbReference>
<dbReference type="PROSITE" id="PS01185">
    <property type="entry name" value="CTCK_1"/>
    <property type="match status" value="1"/>
</dbReference>
<dbReference type="PROSITE" id="PS01225">
    <property type="entry name" value="CTCK_2"/>
    <property type="match status" value="1"/>
</dbReference>
<dbReference type="PROSITE" id="PS00022">
    <property type="entry name" value="EGF_1"/>
    <property type="match status" value="9"/>
</dbReference>
<dbReference type="PROSITE" id="PS01186">
    <property type="entry name" value="EGF_2"/>
    <property type="match status" value="7"/>
</dbReference>
<dbReference type="PROSITE" id="PS50026">
    <property type="entry name" value="EGF_3"/>
    <property type="match status" value="9"/>
</dbReference>
<dbReference type="PROSITE" id="PS01187">
    <property type="entry name" value="EGF_CA"/>
    <property type="match status" value="2"/>
</dbReference>
<dbReference type="PROSITE" id="PS50025">
    <property type="entry name" value="LAM_G_DOMAIN"/>
    <property type="match status" value="1"/>
</dbReference>
<dbReference type="PROSITE" id="PS51450">
    <property type="entry name" value="LRR"/>
    <property type="match status" value="20"/>
</dbReference>
<evidence type="ECO:0000250" key="1"/>
<evidence type="ECO:0000255" key="2"/>
<evidence type="ECO:0000255" key="3">
    <source>
        <dbReference type="PROSITE-ProRule" id="PRU00039"/>
    </source>
</evidence>
<evidence type="ECO:0000255" key="4">
    <source>
        <dbReference type="PROSITE-ProRule" id="PRU00076"/>
    </source>
</evidence>
<evidence type="ECO:0000255" key="5">
    <source>
        <dbReference type="PROSITE-ProRule" id="PRU00122"/>
    </source>
</evidence>
<evidence type="ECO:0000269" key="6">
    <source>
    </source>
</evidence>
<proteinExistence type="evidence at transcript level"/>
<protein>
    <recommendedName>
        <fullName>Slit homolog 3 protein</fullName>
        <shortName>Slit-3</shortName>
    </recommendedName>
    <alternativeName>
        <fullName>Multiple epidermal growth factor-like domains protein 5</fullName>
        <shortName>Multiple EGF-like domains protein 5</shortName>
    </alternativeName>
</protein>